<organism>
    <name type="scientific">Arabidopsis thaliana</name>
    <name type="common">Mouse-ear cress</name>
    <dbReference type="NCBI Taxonomy" id="3702"/>
    <lineage>
        <taxon>Eukaryota</taxon>
        <taxon>Viridiplantae</taxon>
        <taxon>Streptophyta</taxon>
        <taxon>Embryophyta</taxon>
        <taxon>Tracheophyta</taxon>
        <taxon>Spermatophyta</taxon>
        <taxon>Magnoliopsida</taxon>
        <taxon>eudicotyledons</taxon>
        <taxon>Gunneridae</taxon>
        <taxon>Pentapetalae</taxon>
        <taxon>rosids</taxon>
        <taxon>malvids</taxon>
        <taxon>Brassicales</taxon>
        <taxon>Brassicaceae</taxon>
        <taxon>Camelineae</taxon>
        <taxon>Arabidopsis</taxon>
    </lineage>
</organism>
<comment type="function">
    <text evidence="2 3">Chloroplastic alpha-glucanotransferase involved in maltotriose metabolism. Probably uses maltotriose as substrate to transfer a maltosyl unit from one molecule to another, resulting in glucose and maltopentaose. The latter can then be further metabolized to maltose and maltotriose by beta-amylase. Required for normal starch degradation in leaves.</text>
</comment>
<comment type="catalytic activity">
    <reaction>
        <text>Transfers a segment of a (1-&gt;4)-alpha-D-glucan to a new position in an acceptor, which may be glucose or a (1-&gt;4)-alpha-D-glucan.</text>
        <dbReference type="EC" id="2.4.1.25"/>
    </reaction>
</comment>
<comment type="subcellular location">
    <subcellularLocation>
        <location>Plastid</location>
        <location>Chloroplast</location>
    </subcellularLocation>
    <subcellularLocation>
        <location evidence="4">Plastid</location>
        <location evidence="4">Amyloplast</location>
    </subcellularLocation>
</comment>
<comment type="disruption phenotype">
    <text evidence="2 3">Increased amounts of maltotriose and leaf starch.</text>
</comment>
<comment type="similarity">
    <text evidence="4">Belongs to the disproportionating enzyme family.</text>
</comment>
<name>DPE1_ARATH</name>
<dbReference type="EC" id="2.4.1.25"/>
<dbReference type="EMBL" id="AB019236">
    <property type="protein sequence ID" value="BAA97298.1"/>
    <property type="molecule type" value="Genomic_DNA"/>
</dbReference>
<dbReference type="EMBL" id="CP002688">
    <property type="protein sequence ID" value="AED97962.1"/>
    <property type="molecule type" value="Genomic_DNA"/>
</dbReference>
<dbReference type="EMBL" id="AY037231">
    <property type="protein sequence ID" value="AAK59831.1"/>
    <property type="molecule type" value="mRNA"/>
</dbReference>
<dbReference type="EMBL" id="AY081744">
    <property type="protein sequence ID" value="AAL87397.1"/>
    <property type="molecule type" value="mRNA"/>
</dbReference>
<dbReference type="RefSeq" id="NP_201291.1">
    <property type="nucleotide sequence ID" value="NM_125884.4"/>
</dbReference>
<dbReference type="PDB" id="5CPQ">
    <property type="method" value="X-ray"/>
    <property type="resolution" value="2.13 A"/>
    <property type="chains" value="A/B=46-576"/>
</dbReference>
<dbReference type="PDB" id="5CPS">
    <property type="method" value="X-ray"/>
    <property type="resolution" value="1.80 A"/>
    <property type="chains" value="A/B=46-576"/>
</dbReference>
<dbReference type="PDB" id="5CPT">
    <property type="method" value="X-ray"/>
    <property type="resolution" value="2.30 A"/>
    <property type="chains" value="A/B=46-576"/>
</dbReference>
<dbReference type="PDB" id="5CQ1">
    <property type="method" value="X-ray"/>
    <property type="resolution" value="2.30 A"/>
    <property type="chains" value="A/B=46-576"/>
</dbReference>
<dbReference type="PDB" id="5CSU">
    <property type="method" value="X-ray"/>
    <property type="resolution" value="2.53 A"/>
    <property type="chains" value="A/B=46-576"/>
</dbReference>
<dbReference type="PDB" id="5CSY">
    <property type="method" value="X-ray"/>
    <property type="resolution" value="2.05 A"/>
    <property type="chains" value="A/B=46-576"/>
</dbReference>
<dbReference type="PDBsum" id="5CPQ"/>
<dbReference type="PDBsum" id="5CPS"/>
<dbReference type="PDBsum" id="5CPT"/>
<dbReference type="PDBsum" id="5CQ1"/>
<dbReference type="PDBsum" id="5CSU"/>
<dbReference type="PDBsum" id="5CSY"/>
<dbReference type="SMR" id="Q9LV91"/>
<dbReference type="FunCoup" id="Q9LV91">
    <property type="interactions" value="494"/>
</dbReference>
<dbReference type="STRING" id="3702.Q9LV91"/>
<dbReference type="CAZy" id="GH77">
    <property type="family name" value="Glycoside Hydrolase Family 77"/>
</dbReference>
<dbReference type="iPTMnet" id="Q9LV91"/>
<dbReference type="PaxDb" id="3702-AT5G64860.1"/>
<dbReference type="ProteomicsDB" id="241246"/>
<dbReference type="EnsemblPlants" id="AT5G64860.1">
    <property type="protein sequence ID" value="AT5G64860.1"/>
    <property type="gene ID" value="AT5G64860"/>
</dbReference>
<dbReference type="GeneID" id="836609"/>
<dbReference type="Gramene" id="AT5G64860.1">
    <property type="protein sequence ID" value="AT5G64860.1"/>
    <property type="gene ID" value="AT5G64860"/>
</dbReference>
<dbReference type="KEGG" id="ath:AT5G64860"/>
<dbReference type="Araport" id="AT5G64860"/>
<dbReference type="TAIR" id="AT5G64860">
    <property type="gene designation" value="DPE1"/>
</dbReference>
<dbReference type="eggNOG" id="ENOG502QU40">
    <property type="taxonomic scope" value="Eukaryota"/>
</dbReference>
<dbReference type="HOGENOM" id="CLU_014132_1_0_1"/>
<dbReference type="InParanoid" id="Q9LV91"/>
<dbReference type="OMA" id="SWWIRRI"/>
<dbReference type="PhylomeDB" id="Q9LV91"/>
<dbReference type="BioCyc" id="ARA:AT5G64860-MONOMER"/>
<dbReference type="BioCyc" id="MetaCyc:AT5G64860-MONOMER"/>
<dbReference type="BRENDA" id="2.4.1.25">
    <property type="organism ID" value="399"/>
</dbReference>
<dbReference type="EvolutionaryTrace" id="Q9LV91"/>
<dbReference type="PRO" id="PR:Q9LV91"/>
<dbReference type="Proteomes" id="UP000006548">
    <property type="component" value="Chromosome 5"/>
</dbReference>
<dbReference type="ExpressionAtlas" id="Q9LV91">
    <property type="expression patterns" value="baseline and differential"/>
</dbReference>
<dbReference type="GO" id="GO:0009501">
    <property type="term" value="C:amyloplast"/>
    <property type="evidence" value="ECO:0007669"/>
    <property type="project" value="UniProtKB-SubCell"/>
</dbReference>
<dbReference type="GO" id="GO:0009507">
    <property type="term" value="C:chloroplast"/>
    <property type="evidence" value="ECO:0007005"/>
    <property type="project" value="TAIR"/>
</dbReference>
<dbReference type="GO" id="GO:0004134">
    <property type="term" value="F:4-alpha-glucanotransferase activity"/>
    <property type="evidence" value="ECO:0000315"/>
    <property type="project" value="UniProtKB"/>
</dbReference>
<dbReference type="GO" id="GO:0006006">
    <property type="term" value="P:glucose metabolic process"/>
    <property type="evidence" value="ECO:0000315"/>
    <property type="project" value="TAIR"/>
</dbReference>
<dbReference type="GO" id="GO:0000025">
    <property type="term" value="P:maltose catabolic process"/>
    <property type="evidence" value="ECO:0000315"/>
    <property type="project" value="UniProtKB"/>
</dbReference>
<dbReference type="GO" id="GO:0005983">
    <property type="term" value="P:starch catabolic process"/>
    <property type="evidence" value="ECO:0000315"/>
    <property type="project" value="UniProtKB"/>
</dbReference>
<dbReference type="FunFam" id="3.20.20.80:FF:000193">
    <property type="entry name" value="4-alpha-glucanotransferase, chloroplastic/amyloplastic"/>
    <property type="match status" value="1"/>
</dbReference>
<dbReference type="Gene3D" id="3.20.20.80">
    <property type="entry name" value="Glycosidases"/>
    <property type="match status" value="1"/>
</dbReference>
<dbReference type="InterPro" id="IPR003385">
    <property type="entry name" value="Glyco_hydro_77"/>
</dbReference>
<dbReference type="InterPro" id="IPR017853">
    <property type="entry name" value="Glycoside_hydrolase_SF"/>
</dbReference>
<dbReference type="NCBIfam" id="TIGR00217">
    <property type="entry name" value="malQ"/>
    <property type="match status" value="1"/>
</dbReference>
<dbReference type="NCBIfam" id="NF011080">
    <property type="entry name" value="PRK14508.1-3"/>
    <property type="match status" value="1"/>
</dbReference>
<dbReference type="PANTHER" id="PTHR32438">
    <property type="entry name" value="4-ALPHA-GLUCANOTRANSFERASE DPE1, CHLOROPLASTIC/AMYLOPLASTIC"/>
    <property type="match status" value="1"/>
</dbReference>
<dbReference type="PANTHER" id="PTHR32438:SF5">
    <property type="entry name" value="4-ALPHA-GLUCANOTRANSFERASE DPE1, CHLOROPLASTIC_AMYLOPLASTIC"/>
    <property type="match status" value="1"/>
</dbReference>
<dbReference type="Pfam" id="PF02446">
    <property type="entry name" value="Glyco_hydro_77"/>
    <property type="match status" value="1"/>
</dbReference>
<dbReference type="SUPFAM" id="SSF51445">
    <property type="entry name" value="(Trans)glycosidases"/>
    <property type="match status" value="1"/>
</dbReference>
<gene>
    <name type="primary">DPE1</name>
    <name type="ordered locus">At5g64860</name>
    <name type="ORF">MXK3.9</name>
</gene>
<proteinExistence type="evidence at protein level"/>
<sequence length="576" mass="64412">MSILLRPSSSPSLCSSLKLFRLSSPDSLIDAAVLRNRTKPSQSFRMEVVSSNSTCLSSISVGEDFPSEYEQWLPVPDPESRRRAGVLLHPTSFRGPHGIGDLGEEAFRFIDWLHSTGCSVWQVLPLVPPDEGGSPYAGQDANCGNTLLISLDELVKDGLLIKDELPQPIDADSVNYQTANKLKSPLITKAAKRLIDGNGELKSKLLDFRNDPSISCWLEDAAYFAAIDNTLNAYSWFEWPEPLKNRHLSALEAIYESQKEFIDLFIAKQFLFQRQWQKVREYARRQGVDIMGDMPIYVGYHSADVWANKKHFLLNKKGFPLLVSGVPPDLFSETGQLWGSPLYDWKAMESDQYSWWVNRIRRAQDLYDECRIDHFRGFAGFWAVPSEAKVAMVGRWKVGPGKSLFDAISKGVGKIKIIAEDLGVITKDVVELRKSIGAPGMAVLQFAFGGGADNPHLPHNHEVNQVVYSGTHDNDTIRGWWDTLDQEEKSKAMKYLSIAGEDDISWSVIQAAFSSTAQTAIIPMQDILGLGSSARMNTPATEVGNWGWRIPSSTSFDNLETESDRLRDLLSLYGRL</sequence>
<feature type="transit peptide" description="Chloroplast" evidence="1">
    <location>
        <begin position="1"/>
        <end position="45"/>
    </location>
</feature>
<feature type="chain" id="PRO_0000407918" description="4-alpha-glucanotransferase DPE1, chloroplastic/amyloplastic">
    <location>
        <begin position="46"/>
        <end position="576"/>
    </location>
</feature>
<feature type="helix" evidence="6">
    <location>
        <begin position="69"/>
        <end position="71"/>
    </location>
</feature>
<feature type="helix" evidence="6">
    <location>
        <begin position="78"/>
        <end position="80"/>
    </location>
</feature>
<feature type="strand" evidence="6">
    <location>
        <begin position="83"/>
        <end position="87"/>
    </location>
</feature>
<feature type="helix" evidence="6">
    <location>
        <begin position="90"/>
        <end position="92"/>
    </location>
</feature>
<feature type="strand" evidence="5">
    <location>
        <begin position="96"/>
        <end position="99"/>
    </location>
</feature>
<feature type="helix" evidence="6">
    <location>
        <begin position="104"/>
        <end position="116"/>
    </location>
</feature>
<feature type="strand" evidence="6">
    <location>
        <begin position="120"/>
        <end position="122"/>
    </location>
</feature>
<feature type="helix" evidence="7">
    <location>
        <begin position="135"/>
        <end position="137"/>
    </location>
</feature>
<feature type="strand" evidence="6">
    <location>
        <begin position="141"/>
        <end position="143"/>
    </location>
</feature>
<feature type="helix" evidence="6">
    <location>
        <begin position="146"/>
        <end position="148"/>
    </location>
</feature>
<feature type="helix" evidence="6">
    <location>
        <begin position="151"/>
        <end position="156"/>
    </location>
</feature>
<feature type="helix" evidence="6">
    <location>
        <begin position="162"/>
        <end position="164"/>
    </location>
</feature>
<feature type="helix" evidence="6">
    <location>
        <begin position="176"/>
        <end position="196"/>
    </location>
</feature>
<feature type="helix" evidence="6">
    <location>
        <begin position="200"/>
        <end position="210"/>
    </location>
</feature>
<feature type="helix" evidence="6">
    <location>
        <begin position="212"/>
        <end position="230"/>
    </location>
</feature>
<feature type="helix" evidence="6">
    <location>
        <begin position="236"/>
        <end position="238"/>
    </location>
</feature>
<feature type="helix" evidence="6">
    <location>
        <begin position="241"/>
        <end position="244"/>
    </location>
</feature>
<feature type="helix" evidence="6">
    <location>
        <begin position="248"/>
        <end position="257"/>
    </location>
</feature>
<feature type="helix" evidence="6">
    <location>
        <begin position="259"/>
        <end position="285"/>
    </location>
</feature>
<feature type="strand" evidence="6">
    <location>
        <begin position="289"/>
        <end position="297"/>
    </location>
</feature>
<feature type="strand" evidence="6">
    <location>
        <begin position="300"/>
        <end position="302"/>
    </location>
</feature>
<feature type="helix" evidence="6">
    <location>
        <begin position="303"/>
        <end position="306"/>
    </location>
</feature>
<feature type="helix" evidence="6">
    <location>
        <begin position="307"/>
        <end position="311"/>
    </location>
</feature>
<feature type="strand" evidence="6">
    <location>
        <begin position="320"/>
        <end position="326"/>
    </location>
</feature>
<feature type="strand" evidence="6">
    <location>
        <begin position="332"/>
        <end position="334"/>
    </location>
</feature>
<feature type="strand" evidence="6">
    <location>
        <begin position="336"/>
        <end position="341"/>
    </location>
</feature>
<feature type="helix" evidence="6">
    <location>
        <begin position="345"/>
        <end position="349"/>
    </location>
</feature>
<feature type="turn" evidence="6">
    <location>
        <begin position="350"/>
        <end position="353"/>
    </location>
</feature>
<feature type="helix" evidence="6">
    <location>
        <begin position="354"/>
        <end position="366"/>
    </location>
</feature>
<feature type="strand" evidence="6">
    <location>
        <begin position="368"/>
        <end position="373"/>
    </location>
</feature>
<feature type="helix" evidence="6">
    <location>
        <begin position="375"/>
        <end position="378"/>
    </location>
</feature>
<feature type="strand" evidence="6">
    <location>
        <begin position="380"/>
        <end position="385"/>
    </location>
</feature>
<feature type="helix" evidence="6">
    <location>
        <begin position="391"/>
        <end position="393"/>
    </location>
</feature>
<feature type="strand" evidence="6">
    <location>
        <begin position="395"/>
        <end position="398"/>
    </location>
</feature>
<feature type="helix" evidence="6">
    <location>
        <begin position="402"/>
        <end position="412"/>
    </location>
</feature>
<feature type="strand" evidence="6">
    <location>
        <begin position="417"/>
        <end position="419"/>
    </location>
</feature>
<feature type="helix" evidence="6">
    <location>
        <begin position="427"/>
        <end position="436"/>
    </location>
</feature>
<feature type="strand" evidence="6">
    <location>
        <begin position="440"/>
        <end position="443"/>
    </location>
</feature>
<feature type="helix" evidence="6">
    <location>
        <begin position="444"/>
        <end position="446"/>
    </location>
</feature>
<feature type="strand" evidence="6">
    <location>
        <begin position="449"/>
        <end position="451"/>
    </location>
</feature>
<feature type="helix" evidence="6">
    <location>
        <begin position="458"/>
        <end position="460"/>
    </location>
</feature>
<feature type="strand" evidence="6">
    <location>
        <begin position="463"/>
        <end position="469"/>
    </location>
</feature>
<feature type="helix" evidence="6">
    <location>
        <begin position="477"/>
        <end position="483"/>
    </location>
</feature>
<feature type="helix" evidence="6">
    <location>
        <begin position="486"/>
        <end position="495"/>
    </location>
</feature>
<feature type="helix" evidence="6">
    <location>
        <begin position="501"/>
        <end position="503"/>
    </location>
</feature>
<feature type="helix" evidence="6">
    <location>
        <begin position="504"/>
        <end position="514"/>
    </location>
</feature>
<feature type="strand" evidence="6">
    <location>
        <begin position="518"/>
        <end position="523"/>
    </location>
</feature>
<feature type="helix" evidence="6">
    <location>
        <begin position="524"/>
        <end position="527"/>
    </location>
</feature>
<feature type="helix" evidence="6">
    <location>
        <begin position="532"/>
        <end position="534"/>
    </location>
</feature>
<feature type="helix" evidence="6">
    <location>
        <begin position="556"/>
        <end position="558"/>
    </location>
</feature>
<feature type="helix" evidence="6">
    <location>
        <begin position="560"/>
        <end position="572"/>
    </location>
</feature>
<protein>
    <recommendedName>
        <fullName>4-alpha-glucanotransferase DPE1, chloroplastic/amyloplastic</fullName>
        <ecNumber>2.4.1.25</ecNumber>
    </recommendedName>
    <alternativeName>
        <fullName>Amylomaltase</fullName>
    </alternativeName>
    <alternativeName>
        <fullName>Disproportionating enzyme</fullName>
        <shortName>D-enzyme</shortName>
    </alternativeName>
    <alternativeName>
        <fullName>Protein DISPROPORTIONATING ENZYME 1</fullName>
    </alternativeName>
</protein>
<accession>Q9LV91</accession>
<reference key="1">
    <citation type="journal article" date="2000" name="DNA Res.">
        <title>Structural analysis of Arabidopsis thaliana chromosome 5. X. Sequence features of the regions of 3,076,755 bp covered by sixty P1 and TAC clones.</title>
        <authorList>
            <person name="Sato S."/>
            <person name="Nakamura Y."/>
            <person name="Kaneko T."/>
            <person name="Katoh T."/>
            <person name="Asamizu E."/>
            <person name="Kotani H."/>
            <person name="Tabata S."/>
        </authorList>
    </citation>
    <scope>NUCLEOTIDE SEQUENCE [LARGE SCALE GENOMIC DNA]</scope>
    <source>
        <strain>cv. Columbia</strain>
    </source>
</reference>
<reference key="2">
    <citation type="journal article" date="2017" name="Plant J.">
        <title>Araport11: a complete reannotation of the Arabidopsis thaliana reference genome.</title>
        <authorList>
            <person name="Cheng C.Y."/>
            <person name="Krishnakumar V."/>
            <person name="Chan A.P."/>
            <person name="Thibaud-Nissen F."/>
            <person name="Schobel S."/>
            <person name="Town C.D."/>
        </authorList>
    </citation>
    <scope>GENOME REANNOTATION</scope>
    <source>
        <strain>cv. Columbia</strain>
    </source>
</reference>
<reference key="3">
    <citation type="journal article" date="2003" name="Science">
        <title>Empirical analysis of transcriptional activity in the Arabidopsis genome.</title>
        <authorList>
            <person name="Yamada K."/>
            <person name="Lim J."/>
            <person name="Dale J.M."/>
            <person name="Chen H."/>
            <person name="Shinn P."/>
            <person name="Palm C.J."/>
            <person name="Southwick A.M."/>
            <person name="Wu H.C."/>
            <person name="Kim C.J."/>
            <person name="Nguyen M."/>
            <person name="Pham P.K."/>
            <person name="Cheuk R.F."/>
            <person name="Karlin-Newmann G."/>
            <person name="Liu S.X."/>
            <person name="Lam B."/>
            <person name="Sakano H."/>
            <person name="Wu T."/>
            <person name="Yu G."/>
            <person name="Miranda M."/>
            <person name="Quach H.L."/>
            <person name="Tripp M."/>
            <person name="Chang C.H."/>
            <person name="Lee J.M."/>
            <person name="Toriumi M.J."/>
            <person name="Chan M.M."/>
            <person name="Tang C.C."/>
            <person name="Onodera C.S."/>
            <person name="Deng J.M."/>
            <person name="Akiyama K."/>
            <person name="Ansari Y."/>
            <person name="Arakawa T."/>
            <person name="Banh J."/>
            <person name="Banno F."/>
            <person name="Bowser L."/>
            <person name="Brooks S.Y."/>
            <person name="Carninci P."/>
            <person name="Chao Q."/>
            <person name="Choy N."/>
            <person name="Enju A."/>
            <person name="Goldsmith A.D."/>
            <person name="Gurjal M."/>
            <person name="Hansen N.F."/>
            <person name="Hayashizaki Y."/>
            <person name="Johnson-Hopson C."/>
            <person name="Hsuan V.W."/>
            <person name="Iida K."/>
            <person name="Karnes M."/>
            <person name="Khan S."/>
            <person name="Koesema E."/>
            <person name="Ishida J."/>
            <person name="Jiang P.X."/>
            <person name="Jones T."/>
            <person name="Kawai J."/>
            <person name="Kamiya A."/>
            <person name="Meyers C."/>
            <person name="Nakajima M."/>
            <person name="Narusaka M."/>
            <person name="Seki M."/>
            <person name="Sakurai T."/>
            <person name="Satou M."/>
            <person name="Tamse R."/>
            <person name="Vaysberg M."/>
            <person name="Wallender E.K."/>
            <person name="Wong C."/>
            <person name="Yamamura Y."/>
            <person name="Yuan S."/>
            <person name="Shinozaki K."/>
            <person name="Davis R.W."/>
            <person name="Theologis A."/>
            <person name="Ecker J.R."/>
        </authorList>
    </citation>
    <scope>NUCLEOTIDE SEQUENCE [LARGE SCALE MRNA]</scope>
    <source>
        <strain>cv. Columbia</strain>
    </source>
</reference>
<reference key="4">
    <citation type="journal article" date="2001" name="Plant J.">
        <title>A critical role for disproportionating enzyme in starch breakdown is revealed by a knock-out mutation in Arabidopsis.</title>
        <authorList>
            <person name="Critchley J.H."/>
            <person name="Zeeman S.C."/>
            <person name="Takaha T."/>
            <person name="Smith A.M."/>
            <person name="Smith S.M."/>
        </authorList>
    </citation>
    <scope>FUNCTION</scope>
    <scope>DISRUPTION PHENOTYPE</scope>
</reference>
<reference key="5">
    <citation type="journal article" date="2009" name="Mol. Plant">
        <title>Blocking the metabolism of starch breakdown products in Arabidopsis leaves triggers chloroplast degradation.</title>
        <authorList>
            <person name="Stettler M."/>
            <person name="Eicke S."/>
            <person name="Mettler T."/>
            <person name="Messerli G."/>
            <person name="Hoertensteiner S."/>
            <person name="Zeeman S.C."/>
        </authorList>
    </citation>
    <scope>FUNCTION</scope>
    <scope>DISRUPTION PHENOTYPE</scope>
</reference>
<keyword id="KW-0002">3D-structure</keyword>
<keyword id="KW-0035">Amyloplast</keyword>
<keyword id="KW-0119">Carbohydrate metabolism</keyword>
<keyword id="KW-0150">Chloroplast</keyword>
<keyword id="KW-0328">Glycosyltransferase</keyword>
<keyword id="KW-0934">Plastid</keyword>
<keyword id="KW-1185">Reference proteome</keyword>
<keyword id="KW-0808">Transferase</keyword>
<keyword id="KW-0809">Transit peptide</keyword>
<evidence type="ECO:0000255" key="1"/>
<evidence type="ECO:0000269" key="2">
    <source>
    </source>
</evidence>
<evidence type="ECO:0000269" key="3">
    <source>
    </source>
</evidence>
<evidence type="ECO:0000305" key="4"/>
<evidence type="ECO:0007829" key="5">
    <source>
        <dbReference type="PDB" id="5CPQ"/>
    </source>
</evidence>
<evidence type="ECO:0007829" key="6">
    <source>
        <dbReference type="PDB" id="5CPS"/>
    </source>
</evidence>
<evidence type="ECO:0007829" key="7">
    <source>
        <dbReference type="PDB" id="5CSU"/>
    </source>
</evidence>